<accession>F1SYC2</accession>
<keyword id="KW-0349">Heme</keyword>
<keyword id="KW-0408">Iron</keyword>
<keyword id="KW-0472">Membrane</keyword>
<keyword id="KW-0479">Metal-binding</keyword>
<keyword id="KW-0503">Monooxygenase</keyword>
<keyword id="KW-0560">Oxidoreductase</keyword>
<keyword id="KW-0812">Transmembrane</keyword>
<keyword id="KW-1133">Transmembrane helix</keyword>
<protein>
    <recommendedName>
        <fullName evidence="5">Cytochrome P450 monooxygenase 136</fullName>
        <ecNumber evidence="3">1.-.-.-</ecNumber>
    </recommendedName>
</protein>
<dbReference type="EC" id="1.-.-.-" evidence="3"/>
<dbReference type="EMBL" id="AB573333">
    <property type="protein sequence ID" value="BAK09466.1"/>
    <property type="molecule type" value="mRNA"/>
</dbReference>
<dbReference type="SMR" id="F1SYC2"/>
<dbReference type="GO" id="GO:0016020">
    <property type="term" value="C:membrane"/>
    <property type="evidence" value="ECO:0007669"/>
    <property type="project" value="UniProtKB-SubCell"/>
</dbReference>
<dbReference type="GO" id="GO:0020037">
    <property type="term" value="F:heme binding"/>
    <property type="evidence" value="ECO:0007669"/>
    <property type="project" value="InterPro"/>
</dbReference>
<dbReference type="GO" id="GO:0005506">
    <property type="term" value="F:iron ion binding"/>
    <property type="evidence" value="ECO:0007669"/>
    <property type="project" value="InterPro"/>
</dbReference>
<dbReference type="GO" id="GO:0004497">
    <property type="term" value="F:monooxygenase activity"/>
    <property type="evidence" value="ECO:0007669"/>
    <property type="project" value="UniProtKB-KW"/>
</dbReference>
<dbReference type="GO" id="GO:0016705">
    <property type="term" value="F:oxidoreductase activity, acting on paired donors, with incorporation or reduction of molecular oxygen"/>
    <property type="evidence" value="ECO:0007669"/>
    <property type="project" value="InterPro"/>
</dbReference>
<dbReference type="CDD" id="cd11065">
    <property type="entry name" value="CYP64-like"/>
    <property type="match status" value="1"/>
</dbReference>
<dbReference type="Gene3D" id="1.10.630.10">
    <property type="entry name" value="Cytochrome P450"/>
    <property type="match status" value="1"/>
</dbReference>
<dbReference type="InterPro" id="IPR001128">
    <property type="entry name" value="Cyt_P450"/>
</dbReference>
<dbReference type="InterPro" id="IPR002401">
    <property type="entry name" value="Cyt_P450_E_grp-I"/>
</dbReference>
<dbReference type="InterPro" id="IPR036396">
    <property type="entry name" value="Cyt_P450_sf"/>
</dbReference>
<dbReference type="InterPro" id="IPR050364">
    <property type="entry name" value="Cytochrome_P450_fung"/>
</dbReference>
<dbReference type="PANTHER" id="PTHR46300:SF5">
    <property type="entry name" value="CYTOCHROME P450"/>
    <property type="match status" value="1"/>
</dbReference>
<dbReference type="PANTHER" id="PTHR46300">
    <property type="entry name" value="P450, PUTATIVE (EUROFUNG)-RELATED-RELATED"/>
    <property type="match status" value="1"/>
</dbReference>
<dbReference type="Pfam" id="PF00067">
    <property type="entry name" value="p450"/>
    <property type="match status" value="1"/>
</dbReference>
<dbReference type="PRINTS" id="PR00463">
    <property type="entry name" value="EP450I"/>
</dbReference>
<dbReference type="PRINTS" id="PR00385">
    <property type="entry name" value="P450"/>
</dbReference>
<dbReference type="SUPFAM" id="SSF48264">
    <property type="entry name" value="Cytochrome P450"/>
    <property type="match status" value="1"/>
</dbReference>
<reference key="1">
    <citation type="journal article" date="2012" name="Arch. Microbiol.">
        <title>Molecular identification and functional characterization of cytochrome P450 monooxygenases from the brown-rot basidiomycete Postia placenta.</title>
        <authorList>
            <person name="Ide M."/>
            <person name="Ichinose H."/>
            <person name="Wariishi H."/>
        </authorList>
    </citation>
    <scope>NUCLEOTIDE SEQUENCE [MRNA]</scope>
    <scope>IDENTIFICATION</scope>
    <source>
        <strain>ATCC 44394 / Madison 698-R</strain>
    </source>
</reference>
<reference key="2">
    <citation type="journal article" date="2018" name="Microb. Biotechnol.">
        <title>Insight into metabolic diversity of the brown-rot basidiomycete Postia placenta responsible for sesquiterpene biosynthesis: semi-comprehensive screening of cytochrome P450 monooxygenase involved in protoilludene metabolism.</title>
        <authorList>
            <person name="Ichinose H."/>
            <person name="Kitaoka T."/>
        </authorList>
    </citation>
    <scope>FUNCTION</scope>
    <scope>CATALYTIC ACTIVITY</scope>
    <source>
        <strain>ATCC 44394 / Madison 698-R</strain>
    </source>
</reference>
<evidence type="ECO:0000250" key="1">
    <source>
        <dbReference type="UniProtKB" id="P04798"/>
    </source>
</evidence>
<evidence type="ECO:0000255" key="2"/>
<evidence type="ECO:0000269" key="3">
    <source>
    </source>
</evidence>
<evidence type="ECO:0000269" key="4">
    <source>
    </source>
</evidence>
<evidence type="ECO:0000303" key="5">
    <source>
    </source>
</evidence>
<evidence type="ECO:0000303" key="6">
    <source>
    </source>
</evidence>
<evidence type="ECO:0000305" key="7"/>
<sequence>MQLPVQLSSPLALAVLSIATCQLALVWWYQRKRTNPLPPGPSALPFLGNAHQIPLQYPERIFSQWARTYGGVMYLRLFKKSVLILDSVKAAQDLMDKRGAKFSDRPQLTLITDVFAFKPMMFTMPYGDLWRRHRKWYQASLESKAALDTYNAVQEMETCTLLSALVSDSEHFADQVKRFTGAILLEIVYGHAVTSVKDDLIRLSDEMMTQAVSAGSLVATLLDFFPFLMHIPEWFPGGGFKREGARVRHLMRQLLDVPFNEVQQAMLEGSGKACLTTYMLEEQAEHGDLTPDDVDNIKGAATLLFIAGTDTTITTLLTFFLAMVLHPEVVHKAQAEIDRVVGRTRLPSLMDRDALPYLDQVLKEVYRWNPPVPLGIPHQVRDDDVYNGRHIPGGSMVVSNIWSMSRDPDTYEDADRFWPERYEGKSSDELARSDPRRIVYGFGRRLCPGRFLADSSIWLAAARVIATLDIRKVLDAEGKEMTPSAEFISGAVSHPKPFSLDILPRDEVAAKLIAQLDPNHLFSVQGEAI</sequence>
<gene>
    <name evidence="5" type="primary">CYP136</name>
    <name evidence="6" type="synonym">CYP5348E1</name>
    <name evidence="5" type="synonym">CYP5348E1v1</name>
</gene>
<proteinExistence type="evidence at protein level"/>
<organism>
    <name type="scientific">Postia placenta (strain ATCC 44394 / Madison 698-R)</name>
    <name type="common">Brown rot fungus</name>
    <name type="synonym">Poria monticola</name>
    <dbReference type="NCBI Taxonomy" id="561896"/>
    <lineage>
        <taxon>Eukaryota</taxon>
        <taxon>Fungi</taxon>
        <taxon>Dikarya</taxon>
        <taxon>Basidiomycota</taxon>
        <taxon>Agaricomycotina</taxon>
        <taxon>Agaricomycetes</taxon>
        <taxon>Polyporales</taxon>
        <taxon>Adustoporiaceae</taxon>
        <taxon>Rhodonia</taxon>
    </lineage>
</organism>
<comment type="function">
    <text evidence="4">Cytochrome P450 monooxygenase that is able to use delta(6)-protoilludene as a substrate to produce delta(6)-protoilludene-5-ol.</text>
</comment>
<comment type="cofactor">
    <cofactor evidence="1">
        <name>heme</name>
        <dbReference type="ChEBI" id="CHEBI:30413"/>
    </cofactor>
</comment>
<comment type="pathway">
    <text evidence="7">Secondary metabolite biosynthesis.</text>
</comment>
<comment type="subcellular location">
    <subcellularLocation>
        <location evidence="2">Membrane</location>
        <topology evidence="2">Single-pass membrane protein</topology>
    </subcellularLocation>
</comment>
<comment type="similarity">
    <text evidence="7">Belongs to the cytochrome P450 family.</text>
</comment>
<name>CY136_POSPM</name>
<feature type="chain" id="PRO_0000451348" description="Cytochrome P450 monooxygenase 136">
    <location>
        <begin position="1"/>
        <end position="529"/>
    </location>
</feature>
<feature type="transmembrane region" description="Helical" evidence="2">
    <location>
        <begin position="9"/>
        <end position="29"/>
    </location>
</feature>
<feature type="binding site" description="axial binding residue" evidence="1">
    <location>
        <position position="447"/>
    </location>
    <ligand>
        <name>heme</name>
        <dbReference type="ChEBI" id="CHEBI:30413"/>
    </ligand>
    <ligandPart>
        <name>Fe</name>
        <dbReference type="ChEBI" id="CHEBI:18248"/>
    </ligandPart>
</feature>